<accession>P28367</accession>
<accession>O34444</accession>
<feature type="chain" id="PRO_0000166803" description="Peptide chain release factor 2">
    <location>
        <begin position="1"/>
        <end position="366"/>
    </location>
</feature>
<feature type="modified residue" description="N5-methylglutamine" evidence="1">
    <location>
        <position position="251"/>
    </location>
</feature>
<feature type="sequence conflict" description="In Ref. 4; BAA01123." evidence="2" ref="4">
    <original>T</original>
    <variation>D</variation>
    <location>
        <position position="338"/>
    </location>
</feature>
<comment type="function">
    <text>Peptide chain release factor 2 directs the termination of translation in response to the peptide chain termination codons UGA and UAA.</text>
</comment>
<comment type="subcellular location">
    <subcellularLocation>
        <location>Cytoplasm</location>
    </subcellularLocation>
</comment>
<comment type="PTM">
    <text evidence="1">Methylated by PrmC. Methylation increases the termination efficiency of RF2 (By similarity).</text>
</comment>
<comment type="miscellaneous">
    <text>The gene for this protein contains a UGA in-frame termination codon after Leu-24; a naturally occurring frameshift enables complete translation of RF-2. This provides a mechanism for the protein to regulate its own production.</text>
</comment>
<comment type="similarity">
    <text evidence="2">Belongs to the prokaryotic/mitochondrial release factor family.</text>
</comment>
<comment type="sequence caution" evidence="2">
    <conflict type="erroneous initiation">
        <sequence resource="EMBL-CDS" id="BAA01123"/>
    </conflict>
</comment>
<organism>
    <name type="scientific">Bacillus subtilis (strain 168)</name>
    <dbReference type="NCBI Taxonomy" id="224308"/>
    <lineage>
        <taxon>Bacteria</taxon>
        <taxon>Bacillati</taxon>
        <taxon>Bacillota</taxon>
        <taxon>Bacilli</taxon>
        <taxon>Bacillales</taxon>
        <taxon>Bacillaceae</taxon>
        <taxon>Bacillus</taxon>
    </lineage>
</organism>
<proteinExistence type="evidence at protein level"/>
<keyword id="KW-0002">3D-structure</keyword>
<keyword id="KW-0963">Cytoplasm</keyword>
<keyword id="KW-0488">Methylation</keyword>
<keyword id="KW-0648">Protein biosynthesis</keyword>
<keyword id="KW-1185">Reference proteome</keyword>
<keyword id="KW-0688">Ribosomal frameshifting</keyword>
<reference key="1">
    <citation type="journal article" date="1998" name="J. Bacteriol.">
        <title>Suppression of TGA mutations in the Bacillus subtilis spoIIR gene by prfB mutations.</title>
        <authorList>
            <person name="Karow M.L."/>
            <person name="Rogers E.J."/>
            <person name="Lovett P.S."/>
            <person name="Piggot P.J."/>
        </authorList>
    </citation>
    <scope>NUCLEOTIDE SEQUENCE [GENOMIC DNA]</scope>
</reference>
<reference key="2">
    <citation type="submission" date="1997-11" db="EMBL/GenBank/DDBJ databases">
        <title>Nucleotide sequence of the 300-304 chromosomal segment of Bacillus subtilis.</title>
        <authorList>
            <person name="Lazarevic V."/>
            <person name="Soldo B."/>
            <person name="Rivolta C."/>
            <person name="Reynolds S."/>
            <person name="Mauel C."/>
            <person name="Karamata D."/>
        </authorList>
    </citation>
    <scope>NUCLEOTIDE SEQUENCE [GENOMIC DNA]</scope>
</reference>
<reference key="3">
    <citation type="journal article" date="1997" name="Nature">
        <title>The complete genome sequence of the Gram-positive bacterium Bacillus subtilis.</title>
        <authorList>
            <person name="Kunst F."/>
            <person name="Ogasawara N."/>
            <person name="Moszer I."/>
            <person name="Albertini A.M."/>
            <person name="Alloni G."/>
            <person name="Azevedo V."/>
            <person name="Bertero M.G."/>
            <person name="Bessieres P."/>
            <person name="Bolotin A."/>
            <person name="Borchert S."/>
            <person name="Borriss R."/>
            <person name="Boursier L."/>
            <person name="Brans A."/>
            <person name="Braun M."/>
            <person name="Brignell S.C."/>
            <person name="Bron S."/>
            <person name="Brouillet S."/>
            <person name="Bruschi C.V."/>
            <person name="Caldwell B."/>
            <person name="Capuano V."/>
            <person name="Carter N.M."/>
            <person name="Choi S.-K."/>
            <person name="Codani J.-J."/>
            <person name="Connerton I.F."/>
            <person name="Cummings N.J."/>
            <person name="Daniel R.A."/>
            <person name="Denizot F."/>
            <person name="Devine K.M."/>
            <person name="Duesterhoeft A."/>
            <person name="Ehrlich S.D."/>
            <person name="Emmerson P.T."/>
            <person name="Entian K.-D."/>
            <person name="Errington J."/>
            <person name="Fabret C."/>
            <person name="Ferrari E."/>
            <person name="Foulger D."/>
            <person name="Fritz C."/>
            <person name="Fujita M."/>
            <person name="Fujita Y."/>
            <person name="Fuma S."/>
            <person name="Galizzi A."/>
            <person name="Galleron N."/>
            <person name="Ghim S.-Y."/>
            <person name="Glaser P."/>
            <person name="Goffeau A."/>
            <person name="Golightly E.J."/>
            <person name="Grandi G."/>
            <person name="Guiseppi G."/>
            <person name="Guy B.J."/>
            <person name="Haga K."/>
            <person name="Haiech J."/>
            <person name="Harwood C.R."/>
            <person name="Henaut A."/>
            <person name="Hilbert H."/>
            <person name="Holsappel S."/>
            <person name="Hosono S."/>
            <person name="Hullo M.-F."/>
            <person name="Itaya M."/>
            <person name="Jones L.-M."/>
            <person name="Joris B."/>
            <person name="Karamata D."/>
            <person name="Kasahara Y."/>
            <person name="Klaerr-Blanchard M."/>
            <person name="Klein C."/>
            <person name="Kobayashi Y."/>
            <person name="Koetter P."/>
            <person name="Koningstein G."/>
            <person name="Krogh S."/>
            <person name="Kumano M."/>
            <person name="Kurita K."/>
            <person name="Lapidus A."/>
            <person name="Lardinois S."/>
            <person name="Lauber J."/>
            <person name="Lazarevic V."/>
            <person name="Lee S.-M."/>
            <person name="Levine A."/>
            <person name="Liu H."/>
            <person name="Masuda S."/>
            <person name="Mauel C."/>
            <person name="Medigue C."/>
            <person name="Medina N."/>
            <person name="Mellado R.P."/>
            <person name="Mizuno M."/>
            <person name="Moestl D."/>
            <person name="Nakai S."/>
            <person name="Noback M."/>
            <person name="Noone D."/>
            <person name="O'Reilly M."/>
            <person name="Ogawa K."/>
            <person name="Ogiwara A."/>
            <person name="Oudega B."/>
            <person name="Park S.-H."/>
            <person name="Parro V."/>
            <person name="Pohl T.M."/>
            <person name="Portetelle D."/>
            <person name="Porwollik S."/>
            <person name="Prescott A.M."/>
            <person name="Presecan E."/>
            <person name="Pujic P."/>
            <person name="Purnelle B."/>
            <person name="Rapoport G."/>
            <person name="Rey M."/>
            <person name="Reynolds S."/>
            <person name="Rieger M."/>
            <person name="Rivolta C."/>
            <person name="Rocha E."/>
            <person name="Roche B."/>
            <person name="Rose M."/>
            <person name="Sadaie Y."/>
            <person name="Sato T."/>
            <person name="Scanlan E."/>
            <person name="Schleich S."/>
            <person name="Schroeter R."/>
            <person name="Scoffone F."/>
            <person name="Sekiguchi J."/>
            <person name="Sekowska A."/>
            <person name="Seror S.J."/>
            <person name="Serror P."/>
            <person name="Shin B.-S."/>
            <person name="Soldo B."/>
            <person name="Sorokin A."/>
            <person name="Tacconi E."/>
            <person name="Takagi T."/>
            <person name="Takahashi H."/>
            <person name="Takemaru K."/>
            <person name="Takeuchi M."/>
            <person name="Tamakoshi A."/>
            <person name="Tanaka T."/>
            <person name="Terpstra P."/>
            <person name="Tognoni A."/>
            <person name="Tosato V."/>
            <person name="Uchiyama S."/>
            <person name="Vandenbol M."/>
            <person name="Vannier F."/>
            <person name="Vassarotti A."/>
            <person name="Viari A."/>
            <person name="Wambutt R."/>
            <person name="Wedler E."/>
            <person name="Wedler H."/>
            <person name="Weitzenegger T."/>
            <person name="Winters P."/>
            <person name="Wipat A."/>
            <person name="Yamamoto H."/>
            <person name="Yamane K."/>
            <person name="Yasumoto K."/>
            <person name="Yata K."/>
            <person name="Yoshida K."/>
            <person name="Yoshikawa H.-F."/>
            <person name="Zumstein E."/>
            <person name="Yoshikawa H."/>
            <person name="Danchin A."/>
        </authorList>
    </citation>
    <scope>NUCLEOTIDE SEQUENCE [LARGE SCALE GENOMIC DNA]</scope>
    <source>
        <strain>168</strain>
    </source>
</reference>
<reference key="4">
    <citation type="journal article" date="1991" name="Gene">
        <title>Sequencing reveals similarity of the wild-type div+ gene of Bacillus subtilis to the Escherichia coli secA gene.</title>
        <authorList>
            <person name="Sadaie Y."/>
            <person name="Takamatsu H."/>
            <person name="Nakamura K."/>
            <person name="Yamane K."/>
        </authorList>
    </citation>
    <scope>NUCLEOTIDE SEQUENCE [GENOMIC DNA] OF 1-338</scope>
    <source>
        <strain>168 / Marburg / ATCC 6051 / DSM 10 / JCM 1465 / NBRC 13719 / NCIMB 3610 / NRRL NRS-744 / VKM B-501</strain>
    </source>
</reference>
<reference key="5">
    <citation type="journal article" date="1992" name="Nucleic Acids Res.">
        <title>Sequence comparison of new prokaryotic and mitochondrial members of the polypeptide chain release factor family predicts a five-domain model for release factor structure.</title>
        <authorList>
            <person name="Pel H.J."/>
            <person name="Rep M."/>
            <person name="Grivell L.A."/>
        </authorList>
    </citation>
    <scope>PROBABLE FUNCTION</scope>
    <scope>RIBOSOMAL FRAMESHIFT</scope>
</reference>
<protein>
    <recommendedName>
        <fullName>Peptide chain release factor 2</fullName>
        <shortName>RF-2</shortName>
    </recommendedName>
</protein>
<sequence length="366" mass="42073">MELSEIRAELENMASRLADFRGSLDLESKEARIAELDEQMADPEFWNDQQKAQTVINEANGLKDYVNSYKKLNESHEELQMTHDLLKEEPDTDLQLELEKELKSLTKEFNEFELQLLLSEPYDKNNAILELHPGAGGTESQDWGSMLLRMYTRWGERRGFKVETLDYLPGDEAGIKSVTLLIKGHNAYGYLKAEKGVHRLVRISPFDSSGRRHTSFVSCEVMPEFNDEIDIDIRTEDIKVDTYRASGAGGQHVNTTDSAVRITHLPTNVVVTCQTERSQIKNRERAMKMLKAKLYQRRIEEQQAELDEIRGEQKEIGWGSQIRSYVFHPYSMVKDHRTNTEMGNVQAVMDGDIDTFIDAYLRSKLS</sequence>
<gene>
    <name type="primary">prfB</name>
    <name type="ordered locus">BSU35290</name>
</gene>
<dbReference type="EMBL" id="AF013188">
    <property type="protein sequence ID" value="AAC97534.1"/>
    <property type="molecule type" value="Genomic_DNA"/>
</dbReference>
<dbReference type="EMBL" id="AF017113">
    <property type="protein sequence ID" value="AAC67303.1"/>
    <property type="molecule type" value="Genomic_DNA"/>
</dbReference>
<dbReference type="EMBL" id="AL009126">
    <property type="protein sequence ID" value="CAB15546.1"/>
    <property type="molecule type" value="Genomic_DNA"/>
</dbReference>
<dbReference type="EMBL" id="D10279">
    <property type="protein sequence ID" value="BAA01123.1"/>
    <property type="status" value="ALT_INIT"/>
    <property type="molecule type" value="Genomic_DNA"/>
</dbReference>
<dbReference type="PIR" id="H69681">
    <property type="entry name" value="JN0146"/>
</dbReference>
<dbReference type="RefSeq" id="NP_391409.1">
    <property type="nucleotide sequence ID" value="NC_000964.3"/>
</dbReference>
<dbReference type="RefSeq" id="WP_010886623.1">
    <property type="nucleotide sequence ID" value="NZ_OZ025638.1"/>
</dbReference>
<dbReference type="PDB" id="6SZS">
    <property type="method" value="EM"/>
    <property type="resolution" value="3.06 A"/>
    <property type="chains" value="z=5-366"/>
</dbReference>
<dbReference type="PDBsum" id="6SZS"/>
<dbReference type="EMDB" id="EMD-10353"/>
<dbReference type="SMR" id="P28367"/>
<dbReference type="FunCoup" id="P28367">
    <property type="interactions" value="518"/>
</dbReference>
<dbReference type="STRING" id="224308.BSU35290"/>
<dbReference type="jPOST" id="P28367"/>
<dbReference type="PaxDb" id="224308-BSU35290"/>
<dbReference type="EnsemblBacteria" id="CAB15546">
    <property type="protein sequence ID" value="CAB15546"/>
    <property type="gene ID" value="BSU_35290"/>
</dbReference>
<dbReference type="GeneID" id="936692"/>
<dbReference type="KEGG" id="bsu:BSU35290"/>
<dbReference type="PATRIC" id="fig|224308.43.peg.3694"/>
<dbReference type="eggNOG" id="COG1186">
    <property type="taxonomic scope" value="Bacteria"/>
</dbReference>
<dbReference type="InParanoid" id="P28367"/>
<dbReference type="OrthoDB" id="9806673at2"/>
<dbReference type="PhylomeDB" id="P28367"/>
<dbReference type="BioCyc" id="BSUB:BSU35290-MONOMER"/>
<dbReference type="Proteomes" id="UP000001570">
    <property type="component" value="Chromosome"/>
</dbReference>
<dbReference type="GO" id="GO:0005737">
    <property type="term" value="C:cytoplasm"/>
    <property type="evidence" value="ECO:0007669"/>
    <property type="project" value="UniProtKB-SubCell"/>
</dbReference>
<dbReference type="GO" id="GO:0016149">
    <property type="term" value="F:translation release factor activity, codon specific"/>
    <property type="evidence" value="ECO:0007669"/>
    <property type="project" value="UniProtKB-UniRule"/>
</dbReference>
<dbReference type="GO" id="GO:0075523">
    <property type="term" value="P:viral translational frameshifting"/>
    <property type="evidence" value="ECO:0007669"/>
    <property type="project" value="UniProtKB-KW"/>
</dbReference>
<dbReference type="FunFam" id="3.30.160.20:FF:000010">
    <property type="entry name" value="Peptide chain release factor 2"/>
    <property type="match status" value="1"/>
</dbReference>
<dbReference type="Gene3D" id="3.30.160.20">
    <property type="match status" value="1"/>
</dbReference>
<dbReference type="Gene3D" id="3.30.70.1660">
    <property type="match status" value="1"/>
</dbReference>
<dbReference type="Gene3D" id="1.20.58.410">
    <property type="entry name" value="Release factor"/>
    <property type="match status" value="1"/>
</dbReference>
<dbReference type="HAMAP" id="MF_00094">
    <property type="entry name" value="Rel_fac_2"/>
    <property type="match status" value="1"/>
</dbReference>
<dbReference type="InterPro" id="IPR005139">
    <property type="entry name" value="PCRF"/>
</dbReference>
<dbReference type="InterPro" id="IPR000352">
    <property type="entry name" value="Pep_chain_release_fac_I"/>
</dbReference>
<dbReference type="InterPro" id="IPR045853">
    <property type="entry name" value="Pep_chain_release_fac_I_sf"/>
</dbReference>
<dbReference type="InterPro" id="IPR004374">
    <property type="entry name" value="PrfB"/>
</dbReference>
<dbReference type="NCBIfam" id="TIGR00020">
    <property type="entry name" value="prfB"/>
    <property type="match status" value="1"/>
</dbReference>
<dbReference type="PANTHER" id="PTHR43116:SF3">
    <property type="entry name" value="CLASS I PEPTIDE CHAIN RELEASE FACTOR"/>
    <property type="match status" value="1"/>
</dbReference>
<dbReference type="PANTHER" id="PTHR43116">
    <property type="entry name" value="PEPTIDE CHAIN RELEASE FACTOR 2"/>
    <property type="match status" value="1"/>
</dbReference>
<dbReference type="Pfam" id="PF03462">
    <property type="entry name" value="PCRF"/>
    <property type="match status" value="1"/>
</dbReference>
<dbReference type="Pfam" id="PF00472">
    <property type="entry name" value="RF-1"/>
    <property type="match status" value="1"/>
</dbReference>
<dbReference type="SMART" id="SM00937">
    <property type="entry name" value="PCRF"/>
    <property type="match status" value="1"/>
</dbReference>
<dbReference type="SUPFAM" id="SSF75620">
    <property type="entry name" value="Release factor"/>
    <property type="match status" value="1"/>
</dbReference>
<dbReference type="PROSITE" id="PS00745">
    <property type="entry name" value="RF_PROK_I"/>
    <property type="match status" value="1"/>
</dbReference>
<evidence type="ECO:0000250" key="1"/>
<evidence type="ECO:0000305" key="2"/>
<name>RF2_BACSU</name>